<proteinExistence type="inferred from homology"/>
<reference key="1">
    <citation type="journal article" date="2001" name="Gene">
        <title>Assignment of 118 novel cDNAs of cynomolgus monkey brain to human chromosomes.</title>
        <authorList>
            <person name="Osada N."/>
            <person name="Hida M."/>
            <person name="Kususda J."/>
            <person name="Tanuma R."/>
            <person name="Iseki K."/>
            <person name="Hirata M."/>
            <person name="Suto Y."/>
            <person name="Hirai M."/>
            <person name="Terao K."/>
            <person name="Suzuki Y."/>
            <person name="Sugano S."/>
            <person name="Hashimoto K."/>
        </authorList>
    </citation>
    <scope>NUCLEOTIDE SEQUENCE [LARGE SCALE MRNA]</scope>
    <source>
        <tissue>Parietal cortex</tissue>
    </source>
</reference>
<reference key="2">
    <citation type="journal article" date="2001" name="Gene">
        <authorList>
            <person name="Osada N."/>
            <person name="Hida M."/>
            <person name="Kusuda J."/>
            <person name="Tanuma R."/>
            <person name="Iseki K."/>
            <person name="Hirata M."/>
            <person name="Suto Y."/>
            <person name="Hirai M."/>
            <person name="Terao K."/>
            <person name="Suzuki Y."/>
            <person name="Sugano S."/>
            <person name="Hashimoto K."/>
            <person name="Kususda J."/>
        </authorList>
    </citation>
    <scope>ERRATUM OF PUBMED:11574149</scope>
</reference>
<feature type="chain" id="PRO_0000192797" description="Large ribosomal subunit protein eL33">
    <location>
        <begin position="1"/>
        <end position="110"/>
    </location>
</feature>
<feature type="modified residue" description="N6-acetyllysine" evidence="2">
    <location>
        <position position="8"/>
    </location>
</feature>
<feature type="modified residue" description="N6-acetyllysine; alternate" evidence="1">
    <location>
        <position position="63"/>
    </location>
</feature>
<feature type="modified residue" description="N6-succinyllysine; alternate" evidence="1">
    <location>
        <position position="63"/>
    </location>
</feature>
<evidence type="ECO:0000250" key="1">
    <source>
        <dbReference type="UniProtKB" id="O55142"/>
    </source>
</evidence>
<evidence type="ECO:0000250" key="2">
    <source>
        <dbReference type="UniProtKB" id="P18077"/>
    </source>
</evidence>
<evidence type="ECO:0000305" key="3"/>
<dbReference type="EMBL" id="AB093673">
    <property type="protein sequence ID" value="BAC21647.1"/>
    <property type="molecule type" value="mRNA"/>
</dbReference>
<dbReference type="RefSeq" id="NP_001270366.1">
    <property type="nucleotide sequence ID" value="NM_001283437.1"/>
</dbReference>
<dbReference type="RefSeq" id="XP_015300053.1">
    <property type="nucleotide sequence ID" value="XM_015444567.2"/>
</dbReference>
<dbReference type="RefSeq" id="XP_045243271.1">
    <property type="nucleotide sequence ID" value="XM_045387336.1"/>
</dbReference>
<dbReference type="RefSeq" id="XP_045243272.1">
    <property type="nucleotide sequence ID" value="XM_045387337.1"/>
</dbReference>
<dbReference type="RefSeq" id="XP_045243273.1">
    <property type="nucleotide sequence ID" value="XM_045387338.2"/>
</dbReference>
<dbReference type="RefSeq" id="XP_045243274.1">
    <property type="nucleotide sequence ID" value="XM_045387339.1"/>
</dbReference>
<dbReference type="SMR" id="P61272"/>
<dbReference type="STRING" id="9541.ENSMFAP00000012422"/>
<dbReference type="Ensembl" id="ENSMFAT00000082084.1">
    <property type="protein sequence ID" value="ENSMFAP00000056556.1"/>
    <property type="gene ID" value="ENSMFAG00000050543.1"/>
</dbReference>
<dbReference type="GeneID" id="102120755"/>
<dbReference type="CTD" id="6165"/>
<dbReference type="VEuPathDB" id="HostDB:ENSMFAG00000024249"/>
<dbReference type="eggNOG" id="KOG0887">
    <property type="taxonomic scope" value="Eukaryota"/>
</dbReference>
<dbReference type="GeneTree" id="ENSGT00390000016972"/>
<dbReference type="OMA" id="YRTNKHH"/>
<dbReference type="Proteomes" id="UP000233100">
    <property type="component" value="Chromosome 2"/>
</dbReference>
<dbReference type="GO" id="GO:0005737">
    <property type="term" value="C:cytoplasm"/>
    <property type="evidence" value="ECO:0007669"/>
    <property type="project" value="UniProtKB-SubCell"/>
</dbReference>
<dbReference type="GO" id="GO:1990904">
    <property type="term" value="C:ribonucleoprotein complex"/>
    <property type="evidence" value="ECO:0007669"/>
    <property type="project" value="UniProtKB-KW"/>
</dbReference>
<dbReference type="GO" id="GO:0005840">
    <property type="term" value="C:ribosome"/>
    <property type="evidence" value="ECO:0007669"/>
    <property type="project" value="UniProtKB-KW"/>
</dbReference>
<dbReference type="GO" id="GO:0003735">
    <property type="term" value="F:structural constituent of ribosome"/>
    <property type="evidence" value="ECO:0007669"/>
    <property type="project" value="InterPro"/>
</dbReference>
<dbReference type="GO" id="GO:0000049">
    <property type="term" value="F:tRNA binding"/>
    <property type="evidence" value="ECO:0007669"/>
    <property type="project" value="UniProtKB-KW"/>
</dbReference>
<dbReference type="GO" id="GO:0006412">
    <property type="term" value="P:translation"/>
    <property type="evidence" value="ECO:0007669"/>
    <property type="project" value="InterPro"/>
</dbReference>
<dbReference type="FunFam" id="2.40.10.190:FF:000005">
    <property type="entry name" value="60S ribosomal protein L35a"/>
    <property type="match status" value="1"/>
</dbReference>
<dbReference type="Gene3D" id="2.40.10.190">
    <property type="entry name" value="translation elongation factor selb, chain A, domain 4"/>
    <property type="match status" value="1"/>
</dbReference>
<dbReference type="HAMAP" id="MF_00573">
    <property type="entry name" value="Ribosomal_eL33"/>
    <property type="match status" value="1"/>
</dbReference>
<dbReference type="InterPro" id="IPR001780">
    <property type="entry name" value="Ribosomal_eL33"/>
</dbReference>
<dbReference type="InterPro" id="IPR018266">
    <property type="entry name" value="Ribosomal_eL33_CS"/>
</dbReference>
<dbReference type="InterPro" id="IPR038661">
    <property type="entry name" value="Ribosomal_eL33_sf"/>
</dbReference>
<dbReference type="InterPro" id="IPR009000">
    <property type="entry name" value="Transl_B-barrel_sf"/>
</dbReference>
<dbReference type="PANTHER" id="PTHR10902">
    <property type="entry name" value="60S RIBOSOMAL PROTEIN L35A"/>
    <property type="match status" value="1"/>
</dbReference>
<dbReference type="Pfam" id="PF01247">
    <property type="entry name" value="Ribosomal_L35Ae"/>
    <property type="match status" value="1"/>
</dbReference>
<dbReference type="SUPFAM" id="SSF50447">
    <property type="entry name" value="Translation proteins"/>
    <property type="match status" value="1"/>
</dbReference>
<dbReference type="PROSITE" id="PS01105">
    <property type="entry name" value="RIBOSOMAL_L35AE"/>
    <property type="match status" value="1"/>
</dbReference>
<keyword id="KW-0007">Acetylation</keyword>
<keyword id="KW-0963">Cytoplasm</keyword>
<keyword id="KW-1185">Reference proteome</keyword>
<keyword id="KW-0687">Ribonucleoprotein</keyword>
<keyword id="KW-0689">Ribosomal protein</keyword>
<keyword id="KW-0694">RNA-binding</keyword>
<keyword id="KW-0820">tRNA-binding</keyword>
<accession>P61272</accession>
<sequence>MSGRLWSKAIFAGYKRGLRNQREHTALLKIEGVYARDETEFYLGKRCAYVYKAKNNTVTPGGKPNKTRVIWGKVTRAHGNSGMVRAKFRSNLPAKAIGHRIRVMLYPSRI</sequence>
<protein>
    <recommendedName>
        <fullName evidence="3">Large ribosomal subunit protein eL33</fullName>
    </recommendedName>
    <alternativeName>
        <fullName>60S ribosomal protein L35a</fullName>
    </alternativeName>
</protein>
<name>RL35A_MACFA</name>
<organism>
    <name type="scientific">Macaca fascicularis</name>
    <name type="common">Crab-eating macaque</name>
    <name type="synonym">Cynomolgus monkey</name>
    <dbReference type="NCBI Taxonomy" id="9541"/>
    <lineage>
        <taxon>Eukaryota</taxon>
        <taxon>Metazoa</taxon>
        <taxon>Chordata</taxon>
        <taxon>Craniata</taxon>
        <taxon>Vertebrata</taxon>
        <taxon>Euteleostomi</taxon>
        <taxon>Mammalia</taxon>
        <taxon>Eutheria</taxon>
        <taxon>Euarchontoglires</taxon>
        <taxon>Primates</taxon>
        <taxon>Haplorrhini</taxon>
        <taxon>Catarrhini</taxon>
        <taxon>Cercopithecidae</taxon>
        <taxon>Cercopithecinae</taxon>
        <taxon>Macaca</taxon>
    </lineage>
</organism>
<comment type="function">
    <text evidence="2">Component of the large ribosomal subunit. The ribosome is a large ribonucleoprotein complex responsible for the synthesis of proteins in the cell. Required for the proliferation and viability of hematopoietic cells.</text>
</comment>
<comment type="subunit">
    <text evidence="2">Component of the large ribosomal subunit.</text>
</comment>
<comment type="subcellular location">
    <subcellularLocation>
        <location evidence="2">Cytoplasm</location>
    </subcellularLocation>
</comment>
<comment type="similarity">
    <text evidence="3">Belongs to the eukaryotic ribosomal protein eL33 family.</text>
</comment>
<gene>
    <name type="primary">RPL35A</name>
    <name type="ORF">QnpA-15663</name>
</gene>